<evidence type="ECO:0000255" key="1"/>
<evidence type="ECO:0000255" key="2">
    <source>
        <dbReference type="HAMAP-Rule" id="MF_02120"/>
    </source>
</evidence>
<reference key="1">
    <citation type="journal article" date="1999" name="Science">
        <title>Genome sequence of the radioresistant bacterium Deinococcus radiodurans R1.</title>
        <authorList>
            <person name="White O."/>
            <person name="Eisen J.A."/>
            <person name="Heidelberg J.F."/>
            <person name="Hickey E.K."/>
            <person name="Peterson J.D."/>
            <person name="Dodson R.J."/>
            <person name="Haft D.H."/>
            <person name="Gwinn M.L."/>
            <person name="Nelson W.C."/>
            <person name="Richardson D.L."/>
            <person name="Moffat K.S."/>
            <person name="Qin H."/>
            <person name="Jiang L."/>
            <person name="Pamphile W."/>
            <person name="Crosby M."/>
            <person name="Shen M."/>
            <person name="Vamathevan J.J."/>
            <person name="Lam P."/>
            <person name="McDonald L.A."/>
            <person name="Utterback T.R."/>
            <person name="Zalewski C."/>
            <person name="Makarova K.S."/>
            <person name="Aravind L."/>
            <person name="Daly M.J."/>
            <person name="Minton K.W."/>
            <person name="Fleischmann R.D."/>
            <person name="Ketchum K.A."/>
            <person name="Nelson K.E."/>
            <person name="Salzberg S.L."/>
            <person name="Smith H.O."/>
            <person name="Venter J.C."/>
            <person name="Fraser C.M."/>
        </authorList>
    </citation>
    <scope>NUCLEOTIDE SEQUENCE [LARGE SCALE GENOMIC DNA]</scope>
    <source>
        <strain>ATCC 13939 / DSM 20539 / JCM 16871 / CCUG 27074 / LMG 4051 / NBRC 15346 / NCIMB 9279 / VKM B-1422 / R1</strain>
    </source>
</reference>
<comment type="function">
    <text evidence="2">Specifically catalyzes the decarboxylation of meso-diaminopimelate (meso-DAP) to L-lysine.</text>
</comment>
<comment type="catalytic activity">
    <reaction evidence="2">
        <text>meso-2,6-diaminopimelate + H(+) = L-lysine + CO2</text>
        <dbReference type="Rhea" id="RHEA:15101"/>
        <dbReference type="ChEBI" id="CHEBI:15378"/>
        <dbReference type="ChEBI" id="CHEBI:16526"/>
        <dbReference type="ChEBI" id="CHEBI:32551"/>
        <dbReference type="ChEBI" id="CHEBI:57791"/>
        <dbReference type="EC" id="4.1.1.20"/>
    </reaction>
</comment>
<comment type="cofactor">
    <cofactor evidence="2">
        <name>pyridoxal 5'-phosphate</name>
        <dbReference type="ChEBI" id="CHEBI:597326"/>
    </cofactor>
</comment>
<comment type="pathway">
    <text evidence="2">Amino-acid biosynthesis; L-lysine biosynthesis via DAP pathway; L-lysine from DL-2,6-diaminopimelate: step 1/1.</text>
</comment>
<comment type="subunit">
    <text evidence="2">Homodimer.</text>
</comment>
<comment type="similarity">
    <text evidence="2">Belongs to the Orn/Lys/Arg decarboxylase class-II family. LysA subfamily.</text>
</comment>
<sequence length="379" mass="40975">MSLSRHALQDAAQRFGTPLYLYDAEELDAALWRVQRAFGDARIFYAMKANPNLNLLRRYAAAGVGFECVSLGELLRAEAAGAGGERMILNGPAKSDAEYAAAARLGATIVVDREEEVVLLPPGSRVLVRVNPAMTVSTHEHLATGTARSKFGLTPEQVPGTLAELRDAGHEVLGLHMHIGSAIEQAEDFTAAFARVTELRAHIGGLSVLNVGGGWSLNADLEGIAYEAHEAARVFGAELWVEPGRYLVASAGWLLTRVVGTKRTGRNFCLVDAGMTEFLRPMLYGASHPLYPMWDALATEVWDVAGPACESGDLIARGVPLPTPQRGHLLLIGEAGAYGASMSSTYLSRPRPAEVLWTGHDWQLLRRRETPQDIWAAEV</sequence>
<organism>
    <name type="scientific">Deinococcus radiodurans (strain ATCC 13939 / DSM 20539 / JCM 16871 / CCUG 27074 / LMG 4051 / NBRC 15346 / NCIMB 9279 / VKM B-1422 / R1)</name>
    <dbReference type="NCBI Taxonomy" id="243230"/>
    <lineage>
        <taxon>Bacteria</taxon>
        <taxon>Thermotogati</taxon>
        <taxon>Deinococcota</taxon>
        <taxon>Deinococci</taxon>
        <taxon>Deinococcales</taxon>
        <taxon>Deinococcaceae</taxon>
        <taxon>Deinococcus</taxon>
    </lineage>
</organism>
<name>DCDA_DEIRA</name>
<protein>
    <recommendedName>
        <fullName evidence="2">Diaminopimelate decarboxylase</fullName>
        <shortName evidence="2">DAP decarboxylase</shortName>
        <shortName evidence="2">DAPDC</shortName>
        <ecNumber evidence="2">4.1.1.20</ecNumber>
    </recommendedName>
</protein>
<keyword id="KW-0028">Amino-acid biosynthesis</keyword>
<keyword id="KW-0210">Decarboxylase</keyword>
<keyword id="KW-0456">Lyase</keyword>
<keyword id="KW-0457">Lysine biosynthesis</keyword>
<keyword id="KW-0663">Pyridoxal phosphate</keyword>
<keyword id="KW-1185">Reference proteome</keyword>
<gene>
    <name evidence="2" type="primary">lysA</name>
    <name type="ordered locus">DR_1758</name>
</gene>
<accession>Q9RTK2</accession>
<proteinExistence type="inferred from homology"/>
<feature type="chain" id="PRO_0000149922" description="Diaminopimelate decarboxylase">
    <location>
        <begin position="1"/>
        <end position="379"/>
    </location>
</feature>
<feature type="active site" description="Proton donor" evidence="1">
    <location>
        <position position="309"/>
    </location>
</feature>
<feature type="binding site" evidence="2">
    <location>
        <position position="214"/>
    </location>
    <ligand>
        <name>pyridoxal 5'-phosphate</name>
        <dbReference type="ChEBI" id="CHEBI:597326"/>
    </ligand>
</feature>
<feature type="binding site" evidence="2">
    <location>
        <begin position="242"/>
        <end position="245"/>
    </location>
    <ligand>
        <name>pyridoxal 5'-phosphate</name>
        <dbReference type="ChEBI" id="CHEBI:597326"/>
    </ligand>
</feature>
<feature type="binding site" evidence="2">
    <location>
        <position position="245"/>
    </location>
    <ligand>
        <name>substrate</name>
    </ligand>
</feature>
<feature type="binding site" evidence="2">
    <location>
        <position position="280"/>
    </location>
    <ligand>
        <name>substrate</name>
    </ligand>
</feature>
<feature type="binding site" evidence="2">
    <location>
        <position position="284"/>
    </location>
    <ligand>
        <name>substrate</name>
    </ligand>
</feature>
<feature type="binding site" evidence="2">
    <location>
        <position position="310"/>
    </location>
    <ligand>
        <name>substrate</name>
    </ligand>
</feature>
<feature type="binding site" evidence="2">
    <location>
        <position position="338"/>
    </location>
    <ligand>
        <name>pyridoxal 5'-phosphate</name>
        <dbReference type="ChEBI" id="CHEBI:597326"/>
    </ligand>
</feature>
<feature type="binding site" evidence="2">
    <location>
        <position position="338"/>
    </location>
    <ligand>
        <name>substrate</name>
    </ligand>
</feature>
<feature type="modified residue" description="N6-(pyridoxal phosphate)lysine" evidence="2">
    <location>
        <position position="48"/>
    </location>
</feature>
<dbReference type="EC" id="4.1.1.20" evidence="2"/>
<dbReference type="EMBL" id="AE000513">
    <property type="protein sequence ID" value="AAF11313.1"/>
    <property type="molecule type" value="Genomic_DNA"/>
</dbReference>
<dbReference type="PIR" id="G75357">
    <property type="entry name" value="G75357"/>
</dbReference>
<dbReference type="RefSeq" id="NP_295481.1">
    <property type="nucleotide sequence ID" value="NC_001263.1"/>
</dbReference>
<dbReference type="RefSeq" id="WP_010888393.1">
    <property type="nucleotide sequence ID" value="NC_001263.1"/>
</dbReference>
<dbReference type="SMR" id="Q9RTK2"/>
<dbReference type="FunCoup" id="Q9RTK2">
    <property type="interactions" value="344"/>
</dbReference>
<dbReference type="STRING" id="243230.DR_1758"/>
<dbReference type="PaxDb" id="243230-DR_1758"/>
<dbReference type="EnsemblBacteria" id="AAF11313">
    <property type="protein sequence ID" value="AAF11313"/>
    <property type="gene ID" value="DR_1758"/>
</dbReference>
<dbReference type="GeneID" id="69517997"/>
<dbReference type="KEGG" id="dra:DR_1758"/>
<dbReference type="PATRIC" id="fig|243230.17.peg.1968"/>
<dbReference type="eggNOG" id="COG0019">
    <property type="taxonomic scope" value="Bacteria"/>
</dbReference>
<dbReference type="HOGENOM" id="CLU_026444_0_0_0"/>
<dbReference type="InParanoid" id="Q9RTK2"/>
<dbReference type="OrthoDB" id="9802241at2"/>
<dbReference type="UniPathway" id="UPA00034">
    <property type="reaction ID" value="UER00027"/>
</dbReference>
<dbReference type="Proteomes" id="UP000002524">
    <property type="component" value="Chromosome 1"/>
</dbReference>
<dbReference type="GO" id="GO:0008836">
    <property type="term" value="F:diaminopimelate decarboxylase activity"/>
    <property type="evidence" value="ECO:0000318"/>
    <property type="project" value="GO_Central"/>
</dbReference>
<dbReference type="GO" id="GO:0030170">
    <property type="term" value="F:pyridoxal phosphate binding"/>
    <property type="evidence" value="ECO:0007669"/>
    <property type="project" value="UniProtKB-UniRule"/>
</dbReference>
<dbReference type="GO" id="GO:0009089">
    <property type="term" value="P:lysine biosynthetic process via diaminopimelate"/>
    <property type="evidence" value="ECO:0000318"/>
    <property type="project" value="GO_Central"/>
</dbReference>
<dbReference type="CDD" id="cd06828">
    <property type="entry name" value="PLPDE_III_DapDC"/>
    <property type="match status" value="1"/>
</dbReference>
<dbReference type="Gene3D" id="3.20.20.10">
    <property type="entry name" value="Alanine racemase"/>
    <property type="match status" value="1"/>
</dbReference>
<dbReference type="Gene3D" id="2.40.37.10">
    <property type="entry name" value="Lyase, Ornithine Decarboxylase, Chain A, domain 1"/>
    <property type="match status" value="1"/>
</dbReference>
<dbReference type="HAMAP" id="MF_02120">
    <property type="entry name" value="LysA"/>
    <property type="match status" value="1"/>
</dbReference>
<dbReference type="InterPro" id="IPR009006">
    <property type="entry name" value="Ala_racemase/Decarboxylase_C"/>
</dbReference>
<dbReference type="InterPro" id="IPR002986">
    <property type="entry name" value="DAP_deCOOHase_LysA"/>
</dbReference>
<dbReference type="InterPro" id="IPR022643">
    <property type="entry name" value="De-COase2_C"/>
</dbReference>
<dbReference type="InterPro" id="IPR022644">
    <property type="entry name" value="De-COase2_N"/>
</dbReference>
<dbReference type="InterPro" id="IPR000183">
    <property type="entry name" value="Orn/DAP/Arg_de-COase"/>
</dbReference>
<dbReference type="InterPro" id="IPR029066">
    <property type="entry name" value="PLP-binding_barrel"/>
</dbReference>
<dbReference type="NCBIfam" id="TIGR01048">
    <property type="entry name" value="lysA"/>
    <property type="match status" value="1"/>
</dbReference>
<dbReference type="PANTHER" id="PTHR43727">
    <property type="entry name" value="DIAMINOPIMELATE DECARBOXYLASE"/>
    <property type="match status" value="1"/>
</dbReference>
<dbReference type="PANTHER" id="PTHR43727:SF2">
    <property type="entry name" value="GROUP IV DECARBOXYLASE"/>
    <property type="match status" value="1"/>
</dbReference>
<dbReference type="Pfam" id="PF02784">
    <property type="entry name" value="Orn_Arg_deC_N"/>
    <property type="match status" value="1"/>
</dbReference>
<dbReference type="Pfam" id="PF00278">
    <property type="entry name" value="Orn_DAP_Arg_deC"/>
    <property type="match status" value="1"/>
</dbReference>
<dbReference type="PRINTS" id="PR01181">
    <property type="entry name" value="DAPDCRBXLASE"/>
</dbReference>
<dbReference type="PRINTS" id="PR01179">
    <property type="entry name" value="ODADCRBXLASE"/>
</dbReference>
<dbReference type="SUPFAM" id="SSF50621">
    <property type="entry name" value="Alanine racemase C-terminal domain-like"/>
    <property type="match status" value="1"/>
</dbReference>
<dbReference type="SUPFAM" id="SSF51419">
    <property type="entry name" value="PLP-binding barrel"/>
    <property type="match status" value="1"/>
</dbReference>